<feature type="chain" id="PRO_0000258864" description="UPF0301 protein RHE_CH00966">
    <location>
        <begin position="1"/>
        <end position="201"/>
    </location>
</feature>
<name>Y966_RHIEC</name>
<protein>
    <recommendedName>
        <fullName evidence="1">UPF0301 protein RHE_CH00966</fullName>
    </recommendedName>
</protein>
<dbReference type="EMBL" id="CP000133">
    <property type="protein sequence ID" value="ABC89777.1"/>
    <property type="molecule type" value="Genomic_DNA"/>
</dbReference>
<dbReference type="RefSeq" id="WP_011424313.1">
    <property type="nucleotide sequence ID" value="NC_007761.1"/>
</dbReference>
<dbReference type="SMR" id="Q2KBK9"/>
<dbReference type="KEGG" id="ret:RHE_CH00966"/>
<dbReference type="eggNOG" id="COG1678">
    <property type="taxonomic scope" value="Bacteria"/>
</dbReference>
<dbReference type="HOGENOM" id="CLU_057596_1_0_5"/>
<dbReference type="OrthoDB" id="9807486at2"/>
<dbReference type="Proteomes" id="UP000001936">
    <property type="component" value="Chromosome"/>
</dbReference>
<dbReference type="GO" id="GO:0005829">
    <property type="term" value="C:cytosol"/>
    <property type="evidence" value="ECO:0007669"/>
    <property type="project" value="TreeGrafter"/>
</dbReference>
<dbReference type="Gene3D" id="3.40.1740.10">
    <property type="entry name" value="VC0467-like"/>
    <property type="match status" value="1"/>
</dbReference>
<dbReference type="HAMAP" id="MF_00758">
    <property type="entry name" value="UPF0301"/>
    <property type="match status" value="1"/>
</dbReference>
<dbReference type="InterPro" id="IPR003774">
    <property type="entry name" value="AlgH-like"/>
</dbReference>
<dbReference type="NCBIfam" id="NF001266">
    <property type="entry name" value="PRK00228.1-1"/>
    <property type="match status" value="1"/>
</dbReference>
<dbReference type="NCBIfam" id="NF001268">
    <property type="entry name" value="PRK00228.1-4"/>
    <property type="match status" value="1"/>
</dbReference>
<dbReference type="PANTHER" id="PTHR30327">
    <property type="entry name" value="UNCHARACTERIZED PROTEIN YQGE"/>
    <property type="match status" value="1"/>
</dbReference>
<dbReference type="PANTHER" id="PTHR30327:SF1">
    <property type="entry name" value="UPF0301 PROTEIN YQGE"/>
    <property type="match status" value="1"/>
</dbReference>
<dbReference type="Pfam" id="PF02622">
    <property type="entry name" value="DUF179"/>
    <property type="match status" value="1"/>
</dbReference>
<dbReference type="SUPFAM" id="SSF143456">
    <property type="entry name" value="VC0467-like"/>
    <property type="match status" value="1"/>
</dbReference>
<proteinExistence type="inferred from homology"/>
<evidence type="ECO:0000255" key="1">
    <source>
        <dbReference type="HAMAP-Rule" id="MF_00758"/>
    </source>
</evidence>
<comment type="similarity">
    <text evidence="1">Belongs to the UPF0301 (AlgH) family.</text>
</comment>
<reference key="1">
    <citation type="journal article" date="2006" name="Proc. Natl. Acad. Sci. U.S.A.">
        <title>The partitioned Rhizobium etli genome: genetic and metabolic redundancy in seven interacting replicons.</title>
        <authorList>
            <person name="Gonzalez V."/>
            <person name="Santamaria R.I."/>
            <person name="Bustos P."/>
            <person name="Hernandez-Gonzalez I."/>
            <person name="Medrano-Soto A."/>
            <person name="Moreno-Hagelsieb G."/>
            <person name="Janga S.C."/>
            <person name="Ramirez M.A."/>
            <person name="Jimenez-Jacinto V."/>
            <person name="Collado-Vides J."/>
            <person name="Davila G."/>
        </authorList>
    </citation>
    <scope>NUCLEOTIDE SEQUENCE [LARGE SCALE GENOMIC DNA]</scope>
    <source>
        <strain>ATCC 51251 / DSM 11541 / JCM 21823 / NBRC 15573 / CFN 42</strain>
    </source>
</reference>
<gene>
    <name type="ordered locus">RHE_CH00966</name>
</gene>
<sequence length="201" mass="21939">MSLSTLKNRRERGFFDGQFLIAMPGMEDRNFARTVIYICAHSDAGAMGFVINRPQSLTFTDVLLHLDMIKQEEPIVLPQRARDFPIQTGGPVESGRGFVLHSDDYASDSSIPVSDDICLTATLDIVRAISKGAGPKRATMLLGYSSWAAGQLENEVANNGWLTCPANEELIFDRNLDDKYERALAGMGINAAMLSAEAGHA</sequence>
<organism>
    <name type="scientific">Rhizobium etli (strain ATCC 51251 / DSM 11541 / JCM 21823 / NBRC 15573 / CFN 42)</name>
    <dbReference type="NCBI Taxonomy" id="347834"/>
    <lineage>
        <taxon>Bacteria</taxon>
        <taxon>Pseudomonadati</taxon>
        <taxon>Pseudomonadota</taxon>
        <taxon>Alphaproteobacteria</taxon>
        <taxon>Hyphomicrobiales</taxon>
        <taxon>Rhizobiaceae</taxon>
        <taxon>Rhizobium/Agrobacterium group</taxon>
        <taxon>Rhizobium</taxon>
    </lineage>
</organism>
<keyword id="KW-1185">Reference proteome</keyword>
<accession>Q2KBK9</accession>